<evidence type="ECO:0000255" key="1">
    <source>
        <dbReference type="HAMAP-Rule" id="MF_00145"/>
    </source>
</evidence>
<comment type="catalytic activity">
    <reaction evidence="1">
        <text>(2R)-3-phosphoglycerate + ATP = (2R)-3-phospho-glyceroyl phosphate + ADP</text>
        <dbReference type="Rhea" id="RHEA:14801"/>
        <dbReference type="ChEBI" id="CHEBI:30616"/>
        <dbReference type="ChEBI" id="CHEBI:57604"/>
        <dbReference type="ChEBI" id="CHEBI:58272"/>
        <dbReference type="ChEBI" id="CHEBI:456216"/>
        <dbReference type="EC" id="2.7.2.3"/>
    </reaction>
</comment>
<comment type="pathway">
    <text evidence="1">Carbohydrate degradation; glycolysis; pyruvate from D-glyceraldehyde 3-phosphate: step 2/5.</text>
</comment>
<comment type="subunit">
    <text evidence="1">Monomer.</text>
</comment>
<comment type="subcellular location">
    <subcellularLocation>
        <location evidence="1">Cytoplasm</location>
    </subcellularLocation>
</comment>
<comment type="similarity">
    <text evidence="1">Belongs to the phosphoglycerate kinase family.</text>
</comment>
<reference key="1">
    <citation type="journal article" date="2009" name="Appl. Environ. Microbiol.">
        <title>Genomic analysis of 'Elusimicrobium minutum,' the first cultivated representative of the phylum 'Elusimicrobia' (formerly termite group 1).</title>
        <authorList>
            <person name="Herlemann D.P.R."/>
            <person name="Geissinger O."/>
            <person name="Ikeda-Ohtsubo W."/>
            <person name="Kunin V."/>
            <person name="Sun H."/>
            <person name="Lapidus A."/>
            <person name="Hugenholtz P."/>
            <person name="Brune A."/>
        </authorList>
    </citation>
    <scope>NUCLEOTIDE SEQUENCE [LARGE SCALE GENOMIC DNA]</scope>
    <source>
        <strain>Pei191</strain>
    </source>
</reference>
<feature type="chain" id="PRO_1000096340" description="Phosphoglycerate kinase">
    <location>
        <begin position="1"/>
        <end position="399"/>
    </location>
</feature>
<feature type="binding site" evidence="1">
    <location>
        <begin position="24"/>
        <end position="26"/>
    </location>
    <ligand>
        <name>substrate</name>
    </ligand>
</feature>
<feature type="binding site" evidence="1">
    <location>
        <position position="39"/>
    </location>
    <ligand>
        <name>substrate</name>
    </ligand>
</feature>
<feature type="binding site" evidence="1">
    <location>
        <begin position="62"/>
        <end position="65"/>
    </location>
    <ligand>
        <name>substrate</name>
    </ligand>
</feature>
<feature type="binding site" evidence="1">
    <location>
        <position position="121"/>
    </location>
    <ligand>
        <name>substrate</name>
    </ligand>
</feature>
<feature type="binding site" evidence="1">
    <location>
        <position position="154"/>
    </location>
    <ligand>
        <name>substrate</name>
    </ligand>
</feature>
<feature type="binding site" evidence="1">
    <location>
        <position position="204"/>
    </location>
    <ligand>
        <name>ATP</name>
        <dbReference type="ChEBI" id="CHEBI:30616"/>
    </ligand>
</feature>
<feature type="binding site" evidence="1">
    <location>
        <position position="295"/>
    </location>
    <ligand>
        <name>ATP</name>
        <dbReference type="ChEBI" id="CHEBI:30616"/>
    </ligand>
</feature>
<feature type="binding site" evidence="1">
    <location>
        <position position="326"/>
    </location>
    <ligand>
        <name>ATP</name>
        <dbReference type="ChEBI" id="CHEBI:30616"/>
    </ligand>
</feature>
<feature type="binding site" evidence="1">
    <location>
        <begin position="355"/>
        <end position="358"/>
    </location>
    <ligand>
        <name>ATP</name>
        <dbReference type="ChEBI" id="CHEBI:30616"/>
    </ligand>
</feature>
<organism>
    <name type="scientific">Elusimicrobium minutum (strain Pei191)</name>
    <dbReference type="NCBI Taxonomy" id="445932"/>
    <lineage>
        <taxon>Bacteria</taxon>
        <taxon>Pseudomonadati</taxon>
        <taxon>Elusimicrobiota</taxon>
        <taxon>Elusimicrobia</taxon>
        <taxon>Elusimicrobiales</taxon>
        <taxon>Elusimicrobiaceae</taxon>
        <taxon>Elusimicrobium</taxon>
    </lineage>
</organism>
<keyword id="KW-0067">ATP-binding</keyword>
<keyword id="KW-0963">Cytoplasm</keyword>
<keyword id="KW-0324">Glycolysis</keyword>
<keyword id="KW-0418">Kinase</keyword>
<keyword id="KW-0547">Nucleotide-binding</keyword>
<keyword id="KW-1185">Reference proteome</keyword>
<keyword id="KW-0808">Transferase</keyword>
<protein>
    <recommendedName>
        <fullName evidence="1">Phosphoglycerate kinase</fullName>
        <ecNumber evidence="1">2.7.2.3</ecNumber>
    </recommendedName>
</protein>
<dbReference type="EC" id="2.7.2.3" evidence="1"/>
<dbReference type="EMBL" id="CP001055">
    <property type="protein sequence ID" value="ACC98171.1"/>
    <property type="molecule type" value="Genomic_DNA"/>
</dbReference>
<dbReference type="RefSeq" id="WP_012414786.1">
    <property type="nucleotide sequence ID" value="NC_010644.1"/>
</dbReference>
<dbReference type="SMR" id="B2KC44"/>
<dbReference type="STRING" id="445932.Emin_0616"/>
<dbReference type="KEGG" id="emi:Emin_0616"/>
<dbReference type="HOGENOM" id="CLU_025427_0_2_0"/>
<dbReference type="OrthoDB" id="9808460at2"/>
<dbReference type="UniPathway" id="UPA00109">
    <property type="reaction ID" value="UER00185"/>
</dbReference>
<dbReference type="Proteomes" id="UP000001029">
    <property type="component" value="Chromosome"/>
</dbReference>
<dbReference type="GO" id="GO:0005829">
    <property type="term" value="C:cytosol"/>
    <property type="evidence" value="ECO:0007669"/>
    <property type="project" value="TreeGrafter"/>
</dbReference>
<dbReference type="GO" id="GO:0043531">
    <property type="term" value="F:ADP binding"/>
    <property type="evidence" value="ECO:0007669"/>
    <property type="project" value="TreeGrafter"/>
</dbReference>
<dbReference type="GO" id="GO:0005524">
    <property type="term" value="F:ATP binding"/>
    <property type="evidence" value="ECO:0007669"/>
    <property type="project" value="UniProtKB-KW"/>
</dbReference>
<dbReference type="GO" id="GO:0004618">
    <property type="term" value="F:phosphoglycerate kinase activity"/>
    <property type="evidence" value="ECO:0007669"/>
    <property type="project" value="UniProtKB-UniRule"/>
</dbReference>
<dbReference type="GO" id="GO:0006094">
    <property type="term" value="P:gluconeogenesis"/>
    <property type="evidence" value="ECO:0007669"/>
    <property type="project" value="TreeGrafter"/>
</dbReference>
<dbReference type="GO" id="GO:0006096">
    <property type="term" value="P:glycolytic process"/>
    <property type="evidence" value="ECO:0007669"/>
    <property type="project" value="UniProtKB-UniRule"/>
</dbReference>
<dbReference type="CDD" id="cd00318">
    <property type="entry name" value="Phosphoglycerate_kinase"/>
    <property type="match status" value="1"/>
</dbReference>
<dbReference type="FunFam" id="3.40.50.1260:FF:000003">
    <property type="entry name" value="Phosphoglycerate kinase"/>
    <property type="match status" value="1"/>
</dbReference>
<dbReference type="FunFam" id="3.40.50.1260:FF:000006">
    <property type="entry name" value="Phosphoglycerate kinase"/>
    <property type="match status" value="1"/>
</dbReference>
<dbReference type="Gene3D" id="3.40.50.1260">
    <property type="entry name" value="Phosphoglycerate kinase, N-terminal domain"/>
    <property type="match status" value="2"/>
</dbReference>
<dbReference type="HAMAP" id="MF_00145">
    <property type="entry name" value="Phosphoglyc_kinase"/>
    <property type="match status" value="1"/>
</dbReference>
<dbReference type="InterPro" id="IPR001576">
    <property type="entry name" value="Phosphoglycerate_kinase"/>
</dbReference>
<dbReference type="InterPro" id="IPR015911">
    <property type="entry name" value="Phosphoglycerate_kinase_CS"/>
</dbReference>
<dbReference type="InterPro" id="IPR015824">
    <property type="entry name" value="Phosphoglycerate_kinase_N"/>
</dbReference>
<dbReference type="InterPro" id="IPR036043">
    <property type="entry name" value="Phosphoglycerate_kinase_sf"/>
</dbReference>
<dbReference type="PANTHER" id="PTHR11406">
    <property type="entry name" value="PHOSPHOGLYCERATE KINASE"/>
    <property type="match status" value="1"/>
</dbReference>
<dbReference type="PANTHER" id="PTHR11406:SF23">
    <property type="entry name" value="PHOSPHOGLYCERATE KINASE 1, CHLOROPLASTIC-RELATED"/>
    <property type="match status" value="1"/>
</dbReference>
<dbReference type="Pfam" id="PF00162">
    <property type="entry name" value="PGK"/>
    <property type="match status" value="1"/>
</dbReference>
<dbReference type="PIRSF" id="PIRSF000724">
    <property type="entry name" value="Pgk"/>
    <property type="match status" value="1"/>
</dbReference>
<dbReference type="PRINTS" id="PR00477">
    <property type="entry name" value="PHGLYCKINASE"/>
</dbReference>
<dbReference type="SUPFAM" id="SSF53748">
    <property type="entry name" value="Phosphoglycerate kinase"/>
    <property type="match status" value="1"/>
</dbReference>
<dbReference type="PROSITE" id="PS00111">
    <property type="entry name" value="PGLYCERATE_KINASE"/>
    <property type="match status" value="1"/>
</dbReference>
<sequence length="399" mass="42784">MQLENIKKLQDLDVKGKTVLVRVDYNVPLKDGKVDNNKRIVASEKTVKYLLDNNCKVVLMSHLGRPKGKVASEFSLAPVATEVANVFGVKVHFASDCIGEPAAKTIAEAKNGEIVLLENLRFHPEEEKNDETFAAQLAKNGEVFVQEAFGTVHRAHASTSAVTKFLNGGIGYLVQKEVQFLGDALAKPNRPFAAIIGGAKVSDKIMVLNTLLSKVNVLVIGGGMAYTFLKAQGYTTGKSLLEEDKVEEANKILATAKEKGVEILLPVDHVCSTEFSNESPVMTTENANIPEGQMGLDIGPKTIALFDKKLLECKTIFWNGPVGVFEMSNFEKGSFAIASSMVEATKLGATTIIGGGDSLNVLKKAKIKTDLLSHCSTGGGASMEFVEGKELPGLTALAK</sequence>
<name>PGK_ELUMP</name>
<gene>
    <name evidence="1" type="primary">pgk</name>
    <name type="ordered locus">Emin_0616</name>
</gene>
<accession>B2KC44</accession>
<proteinExistence type="inferred from homology"/>